<reference key="1">
    <citation type="journal article" date="2005" name="Nucleic Acids Res.">
        <title>The genome sequence of Xanthomonas oryzae pathovar oryzae KACC10331, the bacterial blight pathogen of rice.</title>
        <authorList>
            <person name="Lee B.-M."/>
            <person name="Park Y.-J."/>
            <person name="Park D.-S."/>
            <person name="Kang H.-W."/>
            <person name="Kim J.-G."/>
            <person name="Song E.-S."/>
            <person name="Park I.-C."/>
            <person name="Yoon U.-H."/>
            <person name="Hahn J.-H."/>
            <person name="Koo B.-S."/>
            <person name="Lee G.-B."/>
            <person name="Kim H."/>
            <person name="Park H.-S."/>
            <person name="Yoon K.-O."/>
            <person name="Kim J.-H."/>
            <person name="Jung C.-H."/>
            <person name="Koh N.-H."/>
            <person name="Seo J.-S."/>
            <person name="Go S.-J."/>
        </authorList>
    </citation>
    <scope>NUCLEOTIDE SEQUENCE [LARGE SCALE GENOMIC DNA]</scope>
    <source>
        <strain>KACC10331 / KXO85</strain>
    </source>
</reference>
<gene>
    <name evidence="1" type="primary">rhlB</name>
    <name type="ordered locus">XOO4301</name>
</gene>
<dbReference type="EC" id="3.6.4.13" evidence="1"/>
<dbReference type="EMBL" id="AE013598">
    <property type="protein sequence ID" value="AAW77555.1"/>
    <property type="status" value="ALT_INIT"/>
    <property type="molecule type" value="Genomic_DNA"/>
</dbReference>
<dbReference type="SMR" id="Q5GUR8"/>
<dbReference type="STRING" id="291331.XOO4301"/>
<dbReference type="KEGG" id="xoo:XOO4301"/>
<dbReference type="HOGENOM" id="CLU_003041_28_4_6"/>
<dbReference type="Proteomes" id="UP000006735">
    <property type="component" value="Chromosome"/>
</dbReference>
<dbReference type="GO" id="GO:0005829">
    <property type="term" value="C:cytosol"/>
    <property type="evidence" value="ECO:0007669"/>
    <property type="project" value="TreeGrafter"/>
</dbReference>
<dbReference type="GO" id="GO:0005524">
    <property type="term" value="F:ATP binding"/>
    <property type="evidence" value="ECO:0007669"/>
    <property type="project" value="UniProtKB-UniRule"/>
</dbReference>
<dbReference type="GO" id="GO:0016887">
    <property type="term" value="F:ATP hydrolysis activity"/>
    <property type="evidence" value="ECO:0007669"/>
    <property type="project" value="RHEA"/>
</dbReference>
<dbReference type="GO" id="GO:0003723">
    <property type="term" value="F:RNA binding"/>
    <property type="evidence" value="ECO:0007669"/>
    <property type="project" value="UniProtKB-UniRule"/>
</dbReference>
<dbReference type="GO" id="GO:0003724">
    <property type="term" value="F:RNA helicase activity"/>
    <property type="evidence" value="ECO:0007669"/>
    <property type="project" value="UniProtKB-UniRule"/>
</dbReference>
<dbReference type="GO" id="GO:0006401">
    <property type="term" value="P:RNA catabolic process"/>
    <property type="evidence" value="ECO:0007669"/>
    <property type="project" value="UniProtKB-UniRule"/>
</dbReference>
<dbReference type="CDD" id="cd00268">
    <property type="entry name" value="DEADc"/>
    <property type="match status" value="1"/>
</dbReference>
<dbReference type="CDD" id="cd18787">
    <property type="entry name" value="SF2_C_DEAD"/>
    <property type="match status" value="1"/>
</dbReference>
<dbReference type="Gene3D" id="3.40.50.300">
    <property type="entry name" value="P-loop containing nucleotide triphosphate hydrolases"/>
    <property type="match status" value="2"/>
</dbReference>
<dbReference type="HAMAP" id="MF_00661">
    <property type="entry name" value="DEAD_helicase_RhlB"/>
    <property type="match status" value="1"/>
</dbReference>
<dbReference type="InterPro" id="IPR011545">
    <property type="entry name" value="DEAD/DEAH_box_helicase_dom"/>
</dbReference>
<dbReference type="InterPro" id="IPR050079">
    <property type="entry name" value="DEAD_box_RNA_helicase"/>
</dbReference>
<dbReference type="InterPro" id="IPR014001">
    <property type="entry name" value="Helicase_ATP-bd"/>
</dbReference>
<dbReference type="InterPro" id="IPR001650">
    <property type="entry name" value="Helicase_C-like"/>
</dbReference>
<dbReference type="InterPro" id="IPR027417">
    <property type="entry name" value="P-loop_NTPase"/>
</dbReference>
<dbReference type="InterPro" id="IPR022077">
    <property type="entry name" value="RhlB"/>
</dbReference>
<dbReference type="InterPro" id="IPR000629">
    <property type="entry name" value="RNA-helicase_DEAD-box_CS"/>
</dbReference>
<dbReference type="InterPro" id="IPR023554">
    <property type="entry name" value="RNA_helicase_ATP-dep_RhlB"/>
</dbReference>
<dbReference type="InterPro" id="IPR014014">
    <property type="entry name" value="RNA_helicase_DEAD_Q_motif"/>
</dbReference>
<dbReference type="NCBIfam" id="NF003390">
    <property type="entry name" value="PRK04537.1"/>
    <property type="match status" value="1"/>
</dbReference>
<dbReference type="PANTHER" id="PTHR47959:SF10">
    <property type="entry name" value="ATP-DEPENDENT RNA HELICASE RHLB"/>
    <property type="match status" value="1"/>
</dbReference>
<dbReference type="PANTHER" id="PTHR47959">
    <property type="entry name" value="ATP-DEPENDENT RNA HELICASE RHLE-RELATED"/>
    <property type="match status" value="1"/>
</dbReference>
<dbReference type="Pfam" id="PF00270">
    <property type="entry name" value="DEAD"/>
    <property type="match status" value="1"/>
</dbReference>
<dbReference type="Pfam" id="PF00271">
    <property type="entry name" value="Helicase_C"/>
    <property type="match status" value="1"/>
</dbReference>
<dbReference type="Pfam" id="PF12300">
    <property type="entry name" value="RhlB"/>
    <property type="match status" value="1"/>
</dbReference>
<dbReference type="SMART" id="SM00487">
    <property type="entry name" value="DEXDc"/>
    <property type="match status" value="1"/>
</dbReference>
<dbReference type="SMART" id="SM00490">
    <property type="entry name" value="HELICc"/>
    <property type="match status" value="1"/>
</dbReference>
<dbReference type="SUPFAM" id="SSF52540">
    <property type="entry name" value="P-loop containing nucleoside triphosphate hydrolases"/>
    <property type="match status" value="1"/>
</dbReference>
<dbReference type="PROSITE" id="PS00039">
    <property type="entry name" value="DEAD_ATP_HELICASE"/>
    <property type="match status" value="1"/>
</dbReference>
<dbReference type="PROSITE" id="PS51192">
    <property type="entry name" value="HELICASE_ATP_BIND_1"/>
    <property type="match status" value="1"/>
</dbReference>
<dbReference type="PROSITE" id="PS51194">
    <property type="entry name" value="HELICASE_CTER"/>
    <property type="match status" value="1"/>
</dbReference>
<dbReference type="PROSITE" id="PS51195">
    <property type="entry name" value="Q_MOTIF"/>
    <property type="match status" value="1"/>
</dbReference>
<protein>
    <recommendedName>
        <fullName evidence="1">ATP-dependent RNA helicase RhlB</fullName>
        <ecNumber evidence="1">3.6.4.13</ecNumber>
    </recommendedName>
</protein>
<sequence length="574" mass="62312">MSDKPLTDVTFSSFDLHPALVAGLESAGFTRCTPIQALTLPVALPGGDVAGQAQTGTGKTLAFLVAVMNRLLNRPALADRKPEDPRALILAPTRELAIQIHKDAVKFGADLGLRFALVYGGVDYDKQRELLQQGVDVIIATPGRLIDYVKQHKVVSLHACEICVLDEADRMFDLGFIKDIRFLLRRMPERGTRQTLLFSATLSHRVLELAYEHMNEPEKLVVETETITAARVRQRIYFPSDDEKQTLLLGLLSRSEGARTMVFVNTKAFVERVARTLERHGYRVGVLSGDVPQKKRESLLNRFQKGQLEILVATDVAARGLHIDGVKYVYNYDLPFDAEDYVHRIGRTARLGEEGDAISFACERYAMSLPDIEAYIEQKIPVEPVTSELLTPLPRAARVPVEGEEADDEAGDSVGTIFREAREQRAAEEQRRGGGRSGPGGGSRSGSGGGRRDGASAGADGKPRPRRKPRVEGEAPAAAAQTEKPVVAAAAAQAPSVGMADAERAPRKRRRRRNGRPVEGAEPAVASTPIAAPAAPRKPTQVVATPVRAANKSSGSPSLLGRIGRRLRSLVSGN</sequence>
<accession>Q5GUR8</accession>
<proteinExistence type="inferred from homology"/>
<evidence type="ECO:0000255" key="1">
    <source>
        <dbReference type="HAMAP-Rule" id="MF_00661"/>
    </source>
</evidence>
<evidence type="ECO:0000256" key="2">
    <source>
        <dbReference type="SAM" id="MobiDB-lite"/>
    </source>
</evidence>
<evidence type="ECO:0000305" key="3"/>
<name>RHLB_XANOR</name>
<organism>
    <name type="scientific">Xanthomonas oryzae pv. oryzae (strain KACC10331 / KXO85)</name>
    <dbReference type="NCBI Taxonomy" id="291331"/>
    <lineage>
        <taxon>Bacteria</taxon>
        <taxon>Pseudomonadati</taxon>
        <taxon>Pseudomonadota</taxon>
        <taxon>Gammaproteobacteria</taxon>
        <taxon>Lysobacterales</taxon>
        <taxon>Lysobacteraceae</taxon>
        <taxon>Xanthomonas</taxon>
    </lineage>
</organism>
<comment type="function">
    <text evidence="1">DEAD-box RNA helicase involved in RNA degradation. Has RNA-dependent ATPase activity and unwinds double-stranded RNA.</text>
</comment>
<comment type="catalytic activity">
    <reaction evidence="1">
        <text>ATP + H2O = ADP + phosphate + H(+)</text>
        <dbReference type="Rhea" id="RHEA:13065"/>
        <dbReference type="ChEBI" id="CHEBI:15377"/>
        <dbReference type="ChEBI" id="CHEBI:15378"/>
        <dbReference type="ChEBI" id="CHEBI:30616"/>
        <dbReference type="ChEBI" id="CHEBI:43474"/>
        <dbReference type="ChEBI" id="CHEBI:456216"/>
        <dbReference type="EC" id="3.6.4.13"/>
    </reaction>
</comment>
<comment type="subunit">
    <text evidence="1">Component of the RNA degradosome, which is a multiprotein complex involved in RNA processing and mRNA degradation.</text>
</comment>
<comment type="subcellular location">
    <subcellularLocation>
        <location evidence="1">Cytoplasm</location>
    </subcellularLocation>
</comment>
<comment type="similarity">
    <text evidence="1">Belongs to the DEAD box helicase family. RhlB subfamily.</text>
</comment>
<comment type="sequence caution" evidence="3">
    <conflict type="erroneous initiation">
        <sequence resource="EMBL-CDS" id="AAW77555"/>
    </conflict>
</comment>
<feature type="chain" id="PRO_0000200792" description="ATP-dependent RNA helicase RhlB">
    <location>
        <begin position="1"/>
        <end position="574"/>
    </location>
</feature>
<feature type="domain" description="Helicase ATP-binding" evidence="1">
    <location>
        <begin position="40"/>
        <end position="220"/>
    </location>
</feature>
<feature type="domain" description="Helicase C-terminal" evidence="1">
    <location>
        <begin position="231"/>
        <end position="393"/>
    </location>
</feature>
<feature type="region of interest" description="Disordered" evidence="2">
    <location>
        <begin position="423"/>
        <end position="574"/>
    </location>
</feature>
<feature type="short sequence motif" description="Q motif">
    <location>
        <begin position="9"/>
        <end position="37"/>
    </location>
</feature>
<feature type="short sequence motif" description="DEAD box">
    <location>
        <begin position="166"/>
        <end position="169"/>
    </location>
</feature>
<feature type="compositionally biased region" description="Basic and acidic residues" evidence="2">
    <location>
        <begin position="423"/>
        <end position="432"/>
    </location>
</feature>
<feature type="compositionally biased region" description="Gly residues" evidence="2">
    <location>
        <begin position="435"/>
        <end position="449"/>
    </location>
</feature>
<feature type="compositionally biased region" description="Low complexity" evidence="2">
    <location>
        <begin position="477"/>
        <end position="495"/>
    </location>
</feature>
<feature type="compositionally biased region" description="Basic residues" evidence="2">
    <location>
        <begin position="506"/>
        <end position="515"/>
    </location>
</feature>
<feature type="compositionally biased region" description="Low complexity" evidence="2">
    <location>
        <begin position="523"/>
        <end position="535"/>
    </location>
</feature>
<feature type="compositionally biased region" description="Low complexity" evidence="2">
    <location>
        <begin position="553"/>
        <end position="562"/>
    </location>
</feature>
<feature type="binding site" evidence="1">
    <location>
        <begin position="53"/>
        <end position="60"/>
    </location>
    <ligand>
        <name>ATP</name>
        <dbReference type="ChEBI" id="CHEBI:30616"/>
    </ligand>
</feature>
<keyword id="KW-0067">ATP-binding</keyword>
<keyword id="KW-0963">Cytoplasm</keyword>
<keyword id="KW-0347">Helicase</keyword>
<keyword id="KW-0378">Hydrolase</keyword>
<keyword id="KW-0547">Nucleotide-binding</keyword>
<keyword id="KW-1185">Reference proteome</keyword>
<keyword id="KW-0694">RNA-binding</keyword>